<name>YSAB_ECOUT</name>
<feature type="signal peptide" evidence="1">
    <location>
        <begin position="1"/>
        <end position="17"/>
    </location>
</feature>
<feature type="chain" id="PRO_0000268609" description="Uncharacterized lipoprotein YsaB">
    <location>
        <begin position="18"/>
        <end position="99"/>
    </location>
</feature>
<feature type="lipid moiety-binding region" description="N-palmitoyl cysteine" evidence="1">
    <location>
        <position position="18"/>
    </location>
</feature>
<feature type="lipid moiety-binding region" description="S-diacylglycerol cysteine" evidence="1">
    <location>
        <position position="18"/>
    </location>
</feature>
<proteinExistence type="inferred from homology"/>
<comment type="subcellular location">
    <subcellularLocation>
        <location evidence="2">Cell membrane</location>
        <topology evidence="2">Lipid-anchor</topology>
    </subcellularLocation>
</comment>
<keyword id="KW-1003">Cell membrane</keyword>
<keyword id="KW-0449">Lipoprotein</keyword>
<keyword id="KW-0472">Membrane</keyword>
<keyword id="KW-0564">Palmitate</keyword>
<keyword id="KW-0732">Signal</keyword>
<evidence type="ECO:0000255" key="1"/>
<evidence type="ECO:0000305" key="2"/>
<organism>
    <name type="scientific">Escherichia coli (strain UTI89 / UPEC)</name>
    <dbReference type="NCBI Taxonomy" id="364106"/>
    <lineage>
        <taxon>Bacteria</taxon>
        <taxon>Pseudomonadati</taxon>
        <taxon>Pseudomonadota</taxon>
        <taxon>Gammaproteobacteria</taxon>
        <taxon>Enterobacterales</taxon>
        <taxon>Enterobacteriaceae</taxon>
        <taxon>Escherichia</taxon>
    </lineage>
</organism>
<accession>Q1R535</accession>
<protein>
    <recommendedName>
        <fullName>Uncharacterized lipoprotein YsaB</fullName>
    </recommendedName>
</protein>
<dbReference type="EMBL" id="CP000243">
    <property type="protein sequence ID" value="ABE09529.1"/>
    <property type="molecule type" value="Genomic_DNA"/>
</dbReference>
<dbReference type="RefSeq" id="WP_000980102.1">
    <property type="nucleotide sequence ID" value="NZ_CP064825.1"/>
</dbReference>
<dbReference type="KEGG" id="eci:UTI89_C4101"/>
<dbReference type="HOGENOM" id="CLU_162515_0_0_6"/>
<dbReference type="Proteomes" id="UP000001952">
    <property type="component" value="Chromosome"/>
</dbReference>
<dbReference type="GO" id="GO:0005886">
    <property type="term" value="C:plasma membrane"/>
    <property type="evidence" value="ECO:0007669"/>
    <property type="project" value="UniProtKB-SubCell"/>
</dbReference>
<dbReference type="InterPro" id="IPR025728">
    <property type="entry name" value="YsaB-like"/>
</dbReference>
<dbReference type="Pfam" id="PF13983">
    <property type="entry name" value="YsaB"/>
    <property type="match status" value="1"/>
</dbReference>
<sequence length="99" mass="11316">MMMNAFFPAMALIVLVGCSTPPPVQKAQRVKVDPLRSLNMEALCKDQAAKRYNTGEQKIDVTAFEQFQGSYEMRGYTFRKEQFVCSFDADGHFLHLSMR</sequence>
<reference key="1">
    <citation type="journal article" date="2006" name="Proc. Natl. Acad. Sci. U.S.A.">
        <title>Identification of genes subject to positive selection in uropathogenic strains of Escherichia coli: a comparative genomics approach.</title>
        <authorList>
            <person name="Chen S.L."/>
            <person name="Hung C.-S."/>
            <person name="Xu J."/>
            <person name="Reigstad C.S."/>
            <person name="Magrini V."/>
            <person name="Sabo A."/>
            <person name="Blasiar D."/>
            <person name="Bieri T."/>
            <person name="Meyer R.R."/>
            <person name="Ozersky P."/>
            <person name="Armstrong J.R."/>
            <person name="Fulton R.S."/>
            <person name="Latreille J.P."/>
            <person name="Spieth J."/>
            <person name="Hooton T.M."/>
            <person name="Mardis E.R."/>
            <person name="Hultgren S.J."/>
            <person name="Gordon J.I."/>
        </authorList>
    </citation>
    <scope>NUCLEOTIDE SEQUENCE [LARGE SCALE GENOMIC DNA]</scope>
    <source>
        <strain>UTI89 / UPEC</strain>
    </source>
</reference>
<gene>
    <name type="primary">ysaB</name>
    <name type="ordered locus">UTI89_C4101</name>
</gene>